<accession>Q8G1E1</accession>
<accession>G0K8S4</accession>
<sequence length="346" mass="36952">MIKISIDAMGGDFGPEVVIPGAAKAFERHPDIRFIFFGLPAQVEPVLARYPKLKEASEFRASEVAIGMDDKPSQALRAGRGKSSMWQAIEAVKTGDADACVSAGNTGALMAMSKFCLRMMSDVERPAIAGIWPTLRGESIVLDIGATIGADARQLVDYAVMGAGIARALFEVRKPTVGLLNVGTEEVKGLDEIKEAGQILRDTPLDGLEYSGFVEGNDIGKGTVDVVVTEGFTGNIALKTAEGTARQMAELLRQAMSRTLLAKIGYVFAKGAFDRLREKMDPNKVNGGVFLGLSGIVIKSHGGANAEGFCSAVEVGYDMVRNRLLEKIEADLAHFHHSHSHVSSKA</sequence>
<evidence type="ECO:0000255" key="1">
    <source>
        <dbReference type="HAMAP-Rule" id="MF_00019"/>
    </source>
</evidence>
<gene>
    <name evidence="1" type="primary">plsX</name>
    <name type="ordered locus">BR0776</name>
    <name type="ordered locus">BS1330_I0772</name>
</gene>
<protein>
    <recommendedName>
        <fullName evidence="1">Phosphate acyltransferase</fullName>
        <ecNumber evidence="1">2.3.1.274</ecNumber>
    </recommendedName>
    <alternativeName>
        <fullName evidence="1">Acyl-ACP phosphotransacylase</fullName>
    </alternativeName>
    <alternativeName>
        <fullName evidence="1">Acyl-[acyl-carrier-protein]--phosphate acyltransferase</fullName>
    </alternativeName>
    <alternativeName>
        <fullName evidence="1">Phosphate-acyl-ACP acyltransferase</fullName>
    </alternativeName>
</protein>
<dbReference type="EC" id="2.3.1.274" evidence="1"/>
<dbReference type="EMBL" id="AE014291">
    <property type="protein sequence ID" value="AAN29705.1"/>
    <property type="molecule type" value="Genomic_DNA"/>
</dbReference>
<dbReference type="EMBL" id="CP002997">
    <property type="protein sequence ID" value="AEM18122.1"/>
    <property type="molecule type" value="Genomic_DNA"/>
</dbReference>
<dbReference type="RefSeq" id="WP_006190076.1">
    <property type="nucleotide sequence ID" value="NZ_KN046804.1"/>
</dbReference>
<dbReference type="SMR" id="Q8G1E1"/>
<dbReference type="GeneID" id="45051847"/>
<dbReference type="KEGG" id="bms:BR0776"/>
<dbReference type="KEGG" id="bsi:BS1330_I0772"/>
<dbReference type="PATRIC" id="fig|204722.21.peg.2653"/>
<dbReference type="HOGENOM" id="CLU_039379_1_0_5"/>
<dbReference type="PhylomeDB" id="Q8G1E1"/>
<dbReference type="UniPathway" id="UPA00085"/>
<dbReference type="Proteomes" id="UP000007104">
    <property type="component" value="Chromosome I"/>
</dbReference>
<dbReference type="GO" id="GO:0005737">
    <property type="term" value="C:cytoplasm"/>
    <property type="evidence" value="ECO:0007669"/>
    <property type="project" value="UniProtKB-SubCell"/>
</dbReference>
<dbReference type="GO" id="GO:0043811">
    <property type="term" value="F:phosphate:acyl-[acyl carrier protein] acyltransferase activity"/>
    <property type="evidence" value="ECO:0007669"/>
    <property type="project" value="UniProtKB-UniRule"/>
</dbReference>
<dbReference type="GO" id="GO:0006633">
    <property type="term" value="P:fatty acid biosynthetic process"/>
    <property type="evidence" value="ECO:0007669"/>
    <property type="project" value="UniProtKB-UniRule"/>
</dbReference>
<dbReference type="GO" id="GO:0008654">
    <property type="term" value="P:phospholipid biosynthetic process"/>
    <property type="evidence" value="ECO:0007669"/>
    <property type="project" value="UniProtKB-KW"/>
</dbReference>
<dbReference type="Gene3D" id="3.40.718.10">
    <property type="entry name" value="Isopropylmalate Dehydrogenase"/>
    <property type="match status" value="1"/>
</dbReference>
<dbReference type="HAMAP" id="MF_00019">
    <property type="entry name" value="PlsX"/>
    <property type="match status" value="1"/>
</dbReference>
<dbReference type="InterPro" id="IPR003664">
    <property type="entry name" value="FA_synthesis"/>
</dbReference>
<dbReference type="InterPro" id="IPR012281">
    <property type="entry name" value="Phospholipid_synth_PlsX-like"/>
</dbReference>
<dbReference type="NCBIfam" id="TIGR00182">
    <property type="entry name" value="plsX"/>
    <property type="match status" value="1"/>
</dbReference>
<dbReference type="PANTHER" id="PTHR30100">
    <property type="entry name" value="FATTY ACID/PHOSPHOLIPID SYNTHESIS PROTEIN PLSX"/>
    <property type="match status" value="1"/>
</dbReference>
<dbReference type="PANTHER" id="PTHR30100:SF1">
    <property type="entry name" value="PHOSPHATE ACYLTRANSFERASE"/>
    <property type="match status" value="1"/>
</dbReference>
<dbReference type="Pfam" id="PF02504">
    <property type="entry name" value="FA_synthesis"/>
    <property type="match status" value="1"/>
</dbReference>
<dbReference type="PIRSF" id="PIRSF002465">
    <property type="entry name" value="Phsphlp_syn_PlsX"/>
    <property type="match status" value="1"/>
</dbReference>
<dbReference type="SUPFAM" id="SSF53659">
    <property type="entry name" value="Isocitrate/Isopropylmalate dehydrogenase-like"/>
    <property type="match status" value="1"/>
</dbReference>
<organism>
    <name type="scientific">Brucella suis biovar 1 (strain 1330)</name>
    <dbReference type="NCBI Taxonomy" id="204722"/>
    <lineage>
        <taxon>Bacteria</taxon>
        <taxon>Pseudomonadati</taxon>
        <taxon>Pseudomonadota</taxon>
        <taxon>Alphaproteobacteria</taxon>
        <taxon>Hyphomicrobiales</taxon>
        <taxon>Brucellaceae</taxon>
        <taxon>Brucella/Ochrobactrum group</taxon>
        <taxon>Brucella</taxon>
    </lineage>
</organism>
<keyword id="KW-0963">Cytoplasm</keyword>
<keyword id="KW-0444">Lipid biosynthesis</keyword>
<keyword id="KW-0443">Lipid metabolism</keyword>
<keyword id="KW-0594">Phospholipid biosynthesis</keyword>
<keyword id="KW-1208">Phospholipid metabolism</keyword>
<keyword id="KW-0808">Transferase</keyword>
<name>PLSX_BRUSU</name>
<comment type="function">
    <text evidence="1">Catalyzes the reversible formation of acyl-phosphate (acyl-PO(4)) from acyl-[acyl-carrier-protein] (acyl-ACP). This enzyme utilizes acyl-ACP as fatty acyl donor, but not acyl-CoA.</text>
</comment>
<comment type="catalytic activity">
    <reaction evidence="1">
        <text>a fatty acyl-[ACP] + phosphate = an acyl phosphate + holo-[ACP]</text>
        <dbReference type="Rhea" id="RHEA:42292"/>
        <dbReference type="Rhea" id="RHEA-COMP:9685"/>
        <dbReference type="Rhea" id="RHEA-COMP:14125"/>
        <dbReference type="ChEBI" id="CHEBI:43474"/>
        <dbReference type="ChEBI" id="CHEBI:59918"/>
        <dbReference type="ChEBI" id="CHEBI:64479"/>
        <dbReference type="ChEBI" id="CHEBI:138651"/>
        <dbReference type="EC" id="2.3.1.274"/>
    </reaction>
</comment>
<comment type="pathway">
    <text evidence="1">Lipid metabolism; phospholipid metabolism.</text>
</comment>
<comment type="subunit">
    <text evidence="1">Homodimer. Probably interacts with PlsY.</text>
</comment>
<comment type="subcellular location">
    <subcellularLocation>
        <location evidence="1">Cytoplasm</location>
    </subcellularLocation>
    <text evidence="1">Associated with the membrane possibly through PlsY.</text>
</comment>
<comment type="similarity">
    <text evidence="1">Belongs to the PlsX family.</text>
</comment>
<proteinExistence type="inferred from homology"/>
<feature type="chain" id="PRO_0000189855" description="Phosphate acyltransferase">
    <location>
        <begin position="1"/>
        <end position="346"/>
    </location>
</feature>
<reference key="1">
    <citation type="journal article" date="2002" name="Proc. Natl. Acad. Sci. U.S.A.">
        <title>The Brucella suis genome reveals fundamental similarities between animal and plant pathogens and symbionts.</title>
        <authorList>
            <person name="Paulsen I.T."/>
            <person name="Seshadri R."/>
            <person name="Nelson K.E."/>
            <person name="Eisen J.A."/>
            <person name="Heidelberg J.F."/>
            <person name="Read T.D."/>
            <person name="Dodson R.J."/>
            <person name="Umayam L.A."/>
            <person name="Brinkac L.M."/>
            <person name="Beanan M.J."/>
            <person name="Daugherty S.C."/>
            <person name="DeBoy R.T."/>
            <person name="Durkin A.S."/>
            <person name="Kolonay J.F."/>
            <person name="Madupu R."/>
            <person name="Nelson W.C."/>
            <person name="Ayodeji B."/>
            <person name="Kraul M."/>
            <person name="Shetty J."/>
            <person name="Malek J.A."/>
            <person name="Van Aken S.E."/>
            <person name="Riedmuller S."/>
            <person name="Tettelin H."/>
            <person name="Gill S.R."/>
            <person name="White O."/>
            <person name="Salzberg S.L."/>
            <person name="Hoover D.L."/>
            <person name="Lindler L.E."/>
            <person name="Halling S.M."/>
            <person name="Boyle S.M."/>
            <person name="Fraser C.M."/>
        </authorList>
    </citation>
    <scope>NUCLEOTIDE SEQUENCE [LARGE SCALE GENOMIC DNA]</scope>
    <source>
        <strain>1330</strain>
    </source>
</reference>
<reference key="2">
    <citation type="journal article" date="2011" name="J. Bacteriol.">
        <title>Revised genome sequence of Brucella suis 1330.</title>
        <authorList>
            <person name="Tae H."/>
            <person name="Shallom S."/>
            <person name="Settlage R."/>
            <person name="Preston D."/>
            <person name="Adams L.G."/>
            <person name="Garner H.R."/>
        </authorList>
    </citation>
    <scope>NUCLEOTIDE SEQUENCE [LARGE SCALE GENOMIC DNA]</scope>
    <source>
        <strain>1330</strain>
    </source>
</reference>